<keyword id="KW-1185">Reference proteome</keyword>
<keyword id="KW-0687">Ribonucleoprotein</keyword>
<keyword id="KW-0689">Ribosomal protein</keyword>
<proteinExistence type="inferred from homology"/>
<evidence type="ECO:0000255" key="1">
    <source>
        <dbReference type="HAMAP-Rule" id="MF_01371"/>
    </source>
</evidence>
<evidence type="ECO:0000305" key="2"/>
<gene>
    <name evidence="1" type="primary">rpmD</name>
    <name type="ordered locus">MAP_4185</name>
</gene>
<feature type="chain" id="PRO_0000273809" description="Large ribosomal subunit protein uL30">
    <location>
        <begin position="1"/>
        <end position="71"/>
    </location>
</feature>
<protein>
    <recommendedName>
        <fullName evidence="1">Large ribosomal subunit protein uL30</fullName>
    </recommendedName>
    <alternativeName>
        <fullName evidence="2">50S ribosomal protein L30</fullName>
    </alternativeName>
</protein>
<sequence length="71" mass="7777">MSQLKITQVRSTIGARWKQRESLRTLGLRRIRHSVIREDNPQTRGLIAVVSHLVEVAPADASSAGTGGSKK</sequence>
<accession>Q73S91</accession>
<dbReference type="EMBL" id="AE016958">
    <property type="protein sequence ID" value="AAS06735.1"/>
    <property type="molecule type" value="Genomic_DNA"/>
</dbReference>
<dbReference type="RefSeq" id="WP_003873494.1">
    <property type="nucleotide sequence ID" value="NZ_CP106873.1"/>
</dbReference>
<dbReference type="SMR" id="Q73S91"/>
<dbReference type="STRING" id="262316.MAP_4185"/>
<dbReference type="GeneID" id="75271961"/>
<dbReference type="KEGG" id="mpa:MAP_4185"/>
<dbReference type="eggNOG" id="COG1841">
    <property type="taxonomic scope" value="Bacteria"/>
</dbReference>
<dbReference type="HOGENOM" id="CLU_131047_2_0_11"/>
<dbReference type="Proteomes" id="UP000000580">
    <property type="component" value="Chromosome"/>
</dbReference>
<dbReference type="GO" id="GO:0022625">
    <property type="term" value="C:cytosolic large ribosomal subunit"/>
    <property type="evidence" value="ECO:0007669"/>
    <property type="project" value="TreeGrafter"/>
</dbReference>
<dbReference type="GO" id="GO:0003735">
    <property type="term" value="F:structural constituent of ribosome"/>
    <property type="evidence" value="ECO:0007669"/>
    <property type="project" value="InterPro"/>
</dbReference>
<dbReference type="GO" id="GO:0006412">
    <property type="term" value="P:translation"/>
    <property type="evidence" value="ECO:0007669"/>
    <property type="project" value="UniProtKB-UniRule"/>
</dbReference>
<dbReference type="CDD" id="cd01658">
    <property type="entry name" value="Ribosomal_L30"/>
    <property type="match status" value="1"/>
</dbReference>
<dbReference type="FunFam" id="3.30.1390.20:FF:000001">
    <property type="entry name" value="50S ribosomal protein L30"/>
    <property type="match status" value="1"/>
</dbReference>
<dbReference type="Gene3D" id="3.30.1390.20">
    <property type="entry name" value="Ribosomal protein L30, ferredoxin-like fold domain"/>
    <property type="match status" value="1"/>
</dbReference>
<dbReference type="HAMAP" id="MF_01371_B">
    <property type="entry name" value="Ribosomal_uL30_B"/>
    <property type="match status" value="1"/>
</dbReference>
<dbReference type="InterPro" id="IPR036919">
    <property type="entry name" value="Ribo_uL30_ferredoxin-like_sf"/>
</dbReference>
<dbReference type="InterPro" id="IPR005996">
    <property type="entry name" value="Ribosomal_uL30_bac-type"/>
</dbReference>
<dbReference type="InterPro" id="IPR018038">
    <property type="entry name" value="Ribosomal_uL30_CS"/>
</dbReference>
<dbReference type="InterPro" id="IPR016082">
    <property type="entry name" value="Ribosomal_uL30_ferredoxin-like"/>
</dbReference>
<dbReference type="NCBIfam" id="TIGR01308">
    <property type="entry name" value="rpmD_bact"/>
    <property type="match status" value="1"/>
</dbReference>
<dbReference type="PANTHER" id="PTHR15892:SF2">
    <property type="entry name" value="LARGE RIBOSOMAL SUBUNIT PROTEIN UL30M"/>
    <property type="match status" value="1"/>
</dbReference>
<dbReference type="PANTHER" id="PTHR15892">
    <property type="entry name" value="MITOCHONDRIAL RIBOSOMAL PROTEIN L30"/>
    <property type="match status" value="1"/>
</dbReference>
<dbReference type="Pfam" id="PF00327">
    <property type="entry name" value="Ribosomal_L30"/>
    <property type="match status" value="1"/>
</dbReference>
<dbReference type="PIRSF" id="PIRSF002211">
    <property type="entry name" value="Ribosomal_L30_bac-type"/>
    <property type="match status" value="1"/>
</dbReference>
<dbReference type="SUPFAM" id="SSF55129">
    <property type="entry name" value="Ribosomal protein L30p/L7e"/>
    <property type="match status" value="1"/>
</dbReference>
<dbReference type="PROSITE" id="PS00634">
    <property type="entry name" value="RIBOSOMAL_L30"/>
    <property type="match status" value="1"/>
</dbReference>
<name>RL30_MYCPA</name>
<organism>
    <name type="scientific">Mycolicibacterium paratuberculosis (strain ATCC BAA-968 / K-10)</name>
    <name type="common">Mycobacterium paratuberculosis</name>
    <dbReference type="NCBI Taxonomy" id="262316"/>
    <lineage>
        <taxon>Bacteria</taxon>
        <taxon>Bacillati</taxon>
        <taxon>Actinomycetota</taxon>
        <taxon>Actinomycetes</taxon>
        <taxon>Mycobacteriales</taxon>
        <taxon>Mycobacteriaceae</taxon>
        <taxon>Mycobacterium</taxon>
        <taxon>Mycobacterium avium complex (MAC)</taxon>
    </lineage>
</organism>
<reference key="1">
    <citation type="journal article" date="2005" name="Proc. Natl. Acad. Sci. U.S.A.">
        <title>The complete genome sequence of Mycobacterium avium subspecies paratuberculosis.</title>
        <authorList>
            <person name="Li L."/>
            <person name="Bannantine J.P."/>
            <person name="Zhang Q."/>
            <person name="Amonsin A."/>
            <person name="May B.J."/>
            <person name="Alt D."/>
            <person name="Banerji N."/>
            <person name="Kanjilal S."/>
            <person name="Kapur V."/>
        </authorList>
    </citation>
    <scope>NUCLEOTIDE SEQUENCE [LARGE SCALE GENOMIC DNA]</scope>
    <source>
        <strain>ATCC BAA-968 / K-10</strain>
    </source>
</reference>
<comment type="subunit">
    <text evidence="1">Part of the 50S ribosomal subunit.</text>
</comment>
<comment type="similarity">
    <text evidence="1">Belongs to the universal ribosomal protein uL30 family.</text>
</comment>